<organism>
    <name type="scientific">Escherichia coli (strain K12)</name>
    <dbReference type="NCBI Taxonomy" id="83333"/>
    <lineage>
        <taxon>Bacteria</taxon>
        <taxon>Pseudomonadati</taxon>
        <taxon>Pseudomonadota</taxon>
        <taxon>Gammaproteobacteria</taxon>
        <taxon>Enterobacterales</taxon>
        <taxon>Enterobacteriaceae</taxon>
        <taxon>Escherichia</taxon>
    </lineage>
</organism>
<evidence type="ECO:0000255" key="1">
    <source>
        <dbReference type="HAMAP-Rule" id="MF_00337"/>
    </source>
</evidence>
<evidence type="ECO:0000269" key="2">
    <source>
    </source>
</evidence>
<evidence type="ECO:0000269" key="3">
    <source>
    </source>
</evidence>
<evidence type="ECO:0000269" key="4">
    <source>
    </source>
</evidence>
<evidence type="ECO:0000269" key="5">
    <source>
    </source>
</evidence>
<evidence type="ECO:0000269" key="6">
    <source ref="5"/>
</evidence>
<evidence type="ECO:0000303" key="7">
    <source>
    </source>
</evidence>
<evidence type="ECO:0000305" key="8">
    <source>
    </source>
</evidence>
<evidence type="ECO:0000305" key="9">
    <source>
    </source>
</evidence>
<name>EX7S_ECOLI</name>
<gene>
    <name evidence="1" type="primary">xseB</name>
    <name type="synonym">yajE</name>
    <name type="ordered locus">b0422</name>
    <name type="ordered locus">JW0412</name>
</gene>
<feature type="initiator methionine" description="Removed" evidence="6">
    <location>
        <position position="1"/>
    </location>
</feature>
<feature type="chain" id="PRO_0000206945" description="Exodeoxyribonuclease 7 small subunit">
    <location>
        <begin position="2"/>
        <end position="80"/>
    </location>
</feature>
<protein>
    <recommendedName>
        <fullName evidence="1">Exodeoxyribonuclease 7 small subunit</fullName>
        <ecNumber evidence="1 4 5">3.1.11.6</ecNumber>
    </recommendedName>
    <alternativeName>
        <fullName evidence="1 7">Exodeoxyribonuclease VII small subunit</fullName>
        <shortName>ExoVII small subunit</shortName>
        <shortName evidence="1 7">Exonuclease VII small subunit</shortName>
    </alternativeName>
</protein>
<keyword id="KW-0002">3D-structure</keyword>
<keyword id="KW-0963">Cytoplasm</keyword>
<keyword id="KW-0903">Direct protein sequencing</keyword>
<keyword id="KW-0269">Exonuclease</keyword>
<keyword id="KW-0378">Hydrolase</keyword>
<keyword id="KW-0540">Nuclease</keyword>
<keyword id="KW-1185">Reference proteome</keyword>
<comment type="function">
    <text evidence="2 3 4 5 9">Bidirectionally degrades single-stranded DNA into large acid-insoluble oligonucleotides, which are then degraded further into small acid-soluble oligonucleotides. It can degrade 3' or 5' ss regions extending from the termini of duplex DNA molecules and displaced ss regions. It can also excise thymine dimers in vitro (Probable) (PubMed:22718974, PubMed:4602029, PubMed:4602030). Required for production of the mature 5'-end of retron Ec78 or Ec83 msDNA. When in excess of the large subunit, counteracts the large subunit's toxicity (PubMed:26626352).</text>
</comment>
<comment type="catalytic activity">
    <reaction evidence="1 2 4 5">
        <text>Exonucleolytic cleavage in either 5'- to 3'- or 3'- to 5'-direction to yield nucleoside 5'-phosphates.</text>
        <dbReference type="EC" id="3.1.11.6"/>
    </reaction>
</comment>
<comment type="cofactor">
    <text evidence="4">Does not require a metal cofactor.</text>
</comment>
<comment type="biophysicochemical properties">
    <phDependence>
        <text evidence="4">Optimum pH is 7.8 to 7.9.</text>
    </phDependence>
</comment>
<comment type="subunit">
    <text evidence="8 9">Heterooligomer composed of two different subunits with an approximate ratio of 4:1 for small to large subunit (Probable). Also estimated to have a 6:1 ration for small to large subunits (Probable).</text>
</comment>
<comment type="interaction">
    <interactant intactId="EBI-1116872">
        <id>P0A8G9</id>
    </interactant>
    <interactant intactId="EBI-9126792">
        <id>P64503</id>
        <label>yebV</label>
    </interactant>
    <organismsDiffer>false</organismsDiffer>
    <experiments>4</experiments>
</comment>
<comment type="subcellular location">
    <subcellularLocation>
        <location evidence="1 9">Cytoplasm</location>
    </subcellularLocation>
</comment>
<comment type="disruption phenotype">
    <text evidence="3">No longer processes msDNA correctly (when retron Ec78 or Ec83 are expressed in the strain).</text>
</comment>
<comment type="similarity">
    <text evidence="1">Belongs to the XseB family.</text>
</comment>
<reference key="1">
    <citation type="journal article" date="1990" name="J. Biochem.">
        <title>Cloning and nucleotide sequence of the ispA gene responsible for farnesyl diphosphate synthase activity in Escherichia coli.</title>
        <authorList>
            <person name="Fujisaki S."/>
            <person name="Hara H."/>
            <person name="Nishimura Y."/>
            <person name="Horiuchi K."/>
            <person name="Nishino T."/>
        </authorList>
    </citation>
    <scope>NUCLEOTIDE SEQUENCE [GENOMIC DNA]</scope>
    <source>
        <strain>K12</strain>
    </source>
</reference>
<reference key="2">
    <citation type="submission" date="1997-01" db="EMBL/GenBank/DDBJ databases">
        <title>Sequence of minutes 4-25 of Escherichia coli.</title>
        <authorList>
            <person name="Chung E."/>
            <person name="Allen E."/>
            <person name="Araujo R."/>
            <person name="Aparicio A.M."/>
            <person name="Davis K."/>
            <person name="Duncan M."/>
            <person name="Federspiel N."/>
            <person name="Hyman R."/>
            <person name="Kalman S."/>
            <person name="Komp C."/>
            <person name="Kurdi O."/>
            <person name="Lew H."/>
            <person name="Lin D."/>
            <person name="Namath A."/>
            <person name="Oefner P."/>
            <person name="Roberts D."/>
            <person name="Schramm S."/>
            <person name="Davis R.W."/>
        </authorList>
    </citation>
    <scope>NUCLEOTIDE SEQUENCE [LARGE SCALE GENOMIC DNA]</scope>
    <source>
        <strain>K12 / MG1655 / ATCC 47076</strain>
    </source>
</reference>
<reference key="3">
    <citation type="journal article" date="1997" name="Science">
        <title>The complete genome sequence of Escherichia coli K-12.</title>
        <authorList>
            <person name="Blattner F.R."/>
            <person name="Plunkett G. III"/>
            <person name="Bloch C.A."/>
            <person name="Perna N.T."/>
            <person name="Burland V."/>
            <person name="Riley M."/>
            <person name="Collado-Vides J."/>
            <person name="Glasner J.D."/>
            <person name="Rode C.K."/>
            <person name="Mayhew G.F."/>
            <person name="Gregor J."/>
            <person name="Davis N.W."/>
            <person name="Kirkpatrick H.A."/>
            <person name="Goeden M.A."/>
            <person name="Rose D.J."/>
            <person name="Mau B."/>
            <person name="Shao Y."/>
        </authorList>
    </citation>
    <scope>NUCLEOTIDE SEQUENCE [LARGE SCALE GENOMIC DNA]</scope>
    <source>
        <strain>K12 / MG1655 / ATCC 47076</strain>
    </source>
</reference>
<reference key="4">
    <citation type="journal article" date="2006" name="Mol. Syst. Biol.">
        <title>Highly accurate genome sequences of Escherichia coli K-12 strains MG1655 and W3110.</title>
        <authorList>
            <person name="Hayashi K."/>
            <person name="Morooka N."/>
            <person name="Yamamoto Y."/>
            <person name="Fujita K."/>
            <person name="Isono K."/>
            <person name="Choi S."/>
            <person name="Ohtsubo E."/>
            <person name="Baba T."/>
            <person name="Wanner B.L."/>
            <person name="Mori H."/>
            <person name="Horiuchi T."/>
        </authorList>
    </citation>
    <scope>NUCLEOTIDE SEQUENCE [LARGE SCALE GENOMIC DNA]</scope>
    <source>
        <strain>K12 / W3110 / ATCC 27325 / DSM 5911</strain>
    </source>
</reference>
<reference key="5">
    <citation type="unpublished observations" date="1995-08">
        <authorList>
            <person name="Diaz D.L."/>
            <person name="Williams K.R."/>
            <person name="Chase J.W."/>
        </authorList>
    </citation>
    <scope>PROTEIN SEQUENCE OF 2-22</scope>
</reference>
<reference key="6">
    <citation type="unpublished observations" date="1994-02">
        <authorList>
            <person name="Diaz D.L."/>
            <person name="Chase J.W."/>
        </authorList>
    </citation>
    <scope>IDENTIFICATION OF GENE</scope>
</reference>
<reference key="7">
    <citation type="journal article" date="1974" name="J. Biol. Chem.">
        <title>Exonuclease VII of Escherichia coli. Purification and properties.</title>
        <authorList>
            <person name="Chase J.W."/>
            <person name="Richardson C.C."/>
        </authorList>
    </citation>
    <scope>CATALYTIC ACTIVITY</scope>
    <scope>NO COFACTOR</scope>
    <scope>BIOPHYSICOCHEMICAL PROPERTIES</scope>
    <source>
        <strain>K12</strain>
    </source>
</reference>
<reference key="8">
    <citation type="journal article" date="1974" name="J. Biol. Chem.">
        <title>Exonuclease VII of Escherichia coli. Mechanism of action.</title>
        <authorList>
            <person name="Chase J.W."/>
            <person name="Richardson C.C."/>
        </authorList>
    </citation>
    <scope>CATALYTIC ACTIVITY</scope>
    <source>
        <strain>K12</strain>
    </source>
</reference>
<reference key="9">
    <citation type="journal article" date="1982" name="J. Biol. Chem.">
        <title>Subunit structure of Escherichia coli exonuclease VII.</title>
        <authorList>
            <person name="Vales L.D."/>
            <person name="Rabin B.A."/>
            <person name="Chase J.W."/>
        </authorList>
    </citation>
    <scope>FUNCTION</scope>
    <scope>IDENTIFICATION OF GENE</scope>
    <scope>SUBUNIT</scope>
    <scope>SUBCELLULAR LOCATION</scope>
    <source>
        <strain>K12</strain>
    </source>
</reference>
<reference key="10">
    <citation type="journal article" date="2012" name="Nucleic Acids Res.">
        <title>Delineation of structural domains and identification of functionally important residues in DNA repair enzyme exonuclease VII.</title>
        <authorList>
            <person name="Poleszak K."/>
            <person name="Kaminska K.H."/>
            <person name="Dunin-Horkawicz S."/>
            <person name="Lupas A."/>
            <person name="Skowronek K.J."/>
            <person name="Bujnicki J.M."/>
        </authorList>
    </citation>
    <scope>FUNCTION</scope>
    <scope>CATALYTIC ACTIVITY</scope>
    <scope>SUBUNIT</scope>
</reference>
<reference key="11">
    <citation type="journal article" date="2015" name="J. Microbiol.">
        <title>Characterization of cell death in Escherichia coli mediated by XseA, a large subunit of exonuclease VII.</title>
        <authorList>
            <person name="Jung H."/>
            <person name="Liang J."/>
            <person name="Jung Y."/>
            <person name="Lim D."/>
        </authorList>
    </citation>
    <scope>FUNCTION IN MSDNA PROCESSING</scope>
    <scope>DISRUPTION PHENOTYPE</scope>
    <source>
        <strain>K12 / BW25113</strain>
    </source>
</reference>
<sequence>MPKKNEAPASFEKALSELEQIVTRLESGDLPLEEALNEFERGVQLARQGQAKLQQAEQRVQILLSDNEDASLTPFTPDNE</sequence>
<accession>P0A8G9</accession>
<accession>P22938</accession>
<accession>Q2MC04</accession>
<dbReference type="EC" id="3.1.11.6" evidence="1 4 5"/>
<dbReference type="EMBL" id="D00694">
    <property type="protein sequence ID" value="BAA00598.1"/>
    <property type="molecule type" value="Genomic_DNA"/>
</dbReference>
<dbReference type="EMBL" id="U82664">
    <property type="protein sequence ID" value="AAB40178.1"/>
    <property type="molecule type" value="Genomic_DNA"/>
</dbReference>
<dbReference type="EMBL" id="U00096">
    <property type="protein sequence ID" value="AAC73525.1"/>
    <property type="molecule type" value="Genomic_DNA"/>
</dbReference>
<dbReference type="EMBL" id="AP009048">
    <property type="protein sequence ID" value="BAE76202.1"/>
    <property type="molecule type" value="Genomic_DNA"/>
</dbReference>
<dbReference type="PIR" id="JQ0664">
    <property type="entry name" value="JQ0664"/>
</dbReference>
<dbReference type="RefSeq" id="NP_414956.1">
    <property type="nucleotide sequence ID" value="NC_000913.3"/>
</dbReference>
<dbReference type="RefSeq" id="WP_001124935.1">
    <property type="nucleotide sequence ID" value="NZ_STEB01000007.1"/>
</dbReference>
<dbReference type="PDB" id="8TXR">
    <property type="method" value="EM"/>
    <property type="resolution" value="3.80 A"/>
    <property type="chains" value="a/b/c/d/e/f/g/h/i/j/k/l/m/n/o/p=1-80"/>
</dbReference>
<dbReference type="PDBsum" id="8TXR"/>
<dbReference type="EMDB" id="EMD-41704"/>
<dbReference type="SMR" id="P0A8G9"/>
<dbReference type="BioGRID" id="4259844">
    <property type="interactions" value="61"/>
</dbReference>
<dbReference type="BioGRID" id="849458">
    <property type="interactions" value="1"/>
</dbReference>
<dbReference type="ComplexPortal" id="CPX-4005">
    <property type="entry name" value="Exodeoxyribonuclease VII complex"/>
</dbReference>
<dbReference type="DIP" id="DIP-48031N"/>
<dbReference type="FunCoup" id="P0A8G9">
    <property type="interactions" value="464"/>
</dbReference>
<dbReference type="IntAct" id="P0A8G9">
    <property type="interactions" value="5"/>
</dbReference>
<dbReference type="STRING" id="511145.b0422"/>
<dbReference type="jPOST" id="P0A8G9"/>
<dbReference type="PaxDb" id="511145-b0422"/>
<dbReference type="EnsemblBacteria" id="AAC73525">
    <property type="protein sequence ID" value="AAC73525"/>
    <property type="gene ID" value="b0422"/>
</dbReference>
<dbReference type="GeneID" id="75202844"/>
<dbReference type="GeneID" id="945069"/>
<dbReference type="KEGG" id="ecj:JW0412"/>
<dbReference type="KEGG" id="eco:b0422"/>
<dbReference type="KEGG" id="ecoc:C3026_02060"/>
<dbReference type="PATRIC" id="fig|1411691.4.peg.1855"/>
<dbReference type="EchoBASE" id="EB1090"/>
<dbReference type="eggNOG" id="COG1722">
    <property type="taxonomic scope" value="Bacteria"/>
</dbReference>
<dbReference type="HOGENOM" id="CLU_145918_3_3_6"/>
<dbReference type="InParanoid" id="P0A8G9"/>
<dbReference type="OMA" id="PLNDYKG"/>
<dbReference type="OrthoDB" id="5591562at2"/>
<dbReference type="PhylomeDB" id="P0A8G9"/>
<dbReference type="BioCyc" id="EcoCyc:EG11098-MONOMER"/>
<dbReference type="BioCyc" id="MetaCyc:EG11098-MONOMER"/>
<dbReference type="BRENDA" id="3.1.11.6">
    <property type="organism ID" value="2026"/>
</dbReference>
<dbReference type="PRO" id="PR:P0A8G9"/>
<dbReference type="Proteomes" id="UP000000625">
    <property type="component" value="Chromosome"/>
</dbReference>
<dbReference type="GO" id="GO:0005829">
    <property type="term" value="C:cytosol"/>
    <property type="evidence" value="ECO:0000314"/>
    <property type="project" value="EcoCyc"/>
</dbReference>
<dbReference type="GO" id="GO:0009318">
    <property type="term" value="C:exodeoxyribonuclease VII complex"/>
    <property type="evidence" value="ECO:0000353"/>
    <property type="project" value="ComplexPortal"/>
</dbReference>
<dbReference type="GO" id="GO:0008855">
    <property type="term" value="F:exodeoxyribonuclease VII activity"/>
    <property type="evidence" value="ECO:0000315"/>
    <property type="project" value="EcoliWiki"/>
</dbReference>
<dbReference type="GO" id="GO:0006308">
    <property type="term" value="P:DNA catabolic process"/>
    <property type="evidence" value="ECO:0000314"/>
    <property type="project" value="ComplexPortal"/>
</dbReference>
<dbReference type="GO" id="GO:0006298">
    <property type="term" value="P:mismatch repair"/>
    <property type="evidence" value="ECO:0000314"/>
    <property type="project" value="ComplexPortal"/>
</dbReference>
<dbReference type="FunFam" id="1.10.287.1040:FF:000001">
    <property type="entry name" value="Exodeoxyribonuclease 7 small subunit"/>
    <property type="match status" value="1"/>
</dbReference>
<dbReference type="Gene3D" id="1.10.287.1040">
    <property type="entry name" value="Exonuclease VII, small subunit"/>
    <property type="match status" value="1"/>
</dbReference>
<dbReference type="HAMAP" id="MF_00337">
    <property type="entry name" value="Exonuc_7_S"/>
    <property type="match status" value="1"/>
</dbReference>
<dbReference type="InterPro" id="IPR003761">
    <property type="entry name" value="Exonuc_VII_S"/>
</dbReference>
<dbReference type="InterPro" id="IPR037004">
    <property type="entry name" value="Exonuc_VII_ssu_sf"/>
</dbReference>
<dbReference type="NCBIfam" id="NF002137">
    <property type="entry name" value="PRK00977.1-1"/>
    <property type="match status" value="1"/>
</dbReference>
<dbReference type="NCBIfam" id="NF002140">
    <property type="entry name" value="PRK00977.1-4"/>
    <property type="match status" value="1"/>
</dbReference>
<dbReference type="NCBIfam" id="TIGR01280">
    <property type="entry name" value="xseB"/>
    <property type="match status" value="1"/>
</dbReference>
<dbReference type="PANTHER" id="PTHR34137">
    <property type="entry name" value="EXODEOXYRIBONUCLEASE 7 SMALL SUBUNIT"/>
    <property type="match status" value="1"/>
</dbReference>
<dbReference type="PANTHER" id="PTHR34137:SF1">
    <property type="entry name" value="EXODEOXYRIBONUCLEASE 7 SMALL SUBUNIT"/>
    <property type="match status" value="1"/>
</dbReference>
<dbReference type="Pfam" id="PF02609">
    <property type="entry name" value="Exonuc_VII_S"/>
    <property type="match status" value="1"/>
</dbReference>
<dbReference type="PIRSF" id="PIRSF006488">
    <property type="entry name" value="Exonuc_VII_S"/>
    <property type="match status" value="1"/>
</dbReference>
<dbReference type="SUPFAM" id="SSF116842">
    <property type="entry name" value="XseB-like"/>
    <property type="match status" value="1"/>
</dbReference>
<proteinExistence type="evidence at protein level"/>